<proteinExistence type="evidence at protein level"/>
<protein>
    <recommendedName>
        <fullName evidence="4">4-hydroxy-3-prenylphenylpyruvate oxygenase/4-hydroxy-3-prenylbenzoate synthase</fullName>
        <ecNumber evidence="2">1.13.11.83</ecNumber>
        <ecNumber evidence="2">1.13.12.23</ecNumber>
    </recommendedName>
    <alternativeName>
        <fullName evidence="4">Bifunctional non-heme iron oxygenase</fullName>
    </alternativeName>
    <alternativeName>
        <fullName evidence="3">Clorobiocin biosynthesis protein CloR</fullName>
    </alternativeName>
</protein>
<accession>Q8GHB1</accession>
<feature type="chain" id="PRO_0000443082" description="4-hydroxy-3-prenylphenylpyruvate oxygenase/4-hydroxy-3-prenylbenzoate synthase">
    <location>
        <begin position="1"/>
        <end position="277"/>
    </location>
</feature>
<organism>
    <name type="scientific">Streptomyces roseochromogenus subsp. oscitans</name>
    <dbReference type="NCBI Taxonomy" id="149682"/>
    <lineage>
        <taxon>Bacteria</taxon>
        <taxon>Bacillati</taxon>
        <taxon>Actinomycetota</taxon>
        <taxon>Actinomycetes</taxon>
        <taxon>Kitasatosporales</taxon>
        <taxon>Streptomycetaceae</taxon>
        <taxon>Streptomyces</taxon>
    </lineage>
</organism>
<gene>
    <name evidence="3" type="primary">cloR</name>
</gene>
<reference key="1">
    <citation type="journal article" date="2002" name="Microbiology">
        <title>Molecular cloning and sequence analysis of the clorobiocin biosynthetic gene cluster: new insights into the biosynthesis of aminocoumarin antibiotics.</title>
        <authorList>
            <person name="Pojer F."/>
            <person name="Li S.M."/>
            <person name="Heide L."/>
        </authorList>
    </citation>
    <scope>NUCLEOTIDE SEQUENCE [GENOMIC DNA]</scope>
    <scope>FUNCTION</scope>
    <scope>DISRUPTION PHENOTYPE</scope>
    <scope>PATHWAY</scope>
    <source>
        <strain evidence="7">DS 12.976</strain>
    </source>
</reference>
<reference key="2">
    <citation type="journal article" date="2003" name="J. Biol. Chem.">
        <title>CloR, a bifunctional non-heme iron oxygenase involved in clorobiocin biosynthesis.</title>
        <authorList>
            <person name="Pojer F."/>
            <person name="Kahlich R."/>
            <person name="Kammerer B."/>
            <person name="Li S.M."/>
            <person name="Heide L."/>
        </authorList>
    </citation>
    <scope>FUNCTION</scope>
    <scope>CATALYTIC ACTIVITY</scope>
    <scope>COFACTOR</scope>
    <scope>ACTIVITY REGULATION</scope>
    <scope>SUBUNIT</scope>
    <scope>REACTION MECHANISM</scope>
    <source>
        <strain>DS 12.976</strain>
    </source>
</reference>
<dbReference type="EC" id="1.13.11.83" evidence="2"/>
<dbReference type="EC" id="1.13.12.23" evidence="2"/>
<dbReference type="EMBL" id="AF329398">
    <property type="protein sequence ID" value="AAN65240.1"/>
    <property type="molecule type" value="Genomic_DNA"/>
</dbReference>
<dbReference type="SMR" id="Q8GHB1"/>
<dbReference type="KEGG" id="ag:AAN65240"/>
<dbReference type="BRENDA" id="1.13.11.83">
    <property type="organism ID" value="5951"/>
</dbReference>
<dbReference type="BRENDA" id="1.13.12.23">
    <property type="organism ID" value="5951"/>
</dbReference>
<dbReference type="GO" id="GO:0005856">
    <property type="term" value="C:cytoskeleton"/>
    <property type="evidence" value="ECO:0007669"/>
    <property type="project" value="TreeGrafter"/>
</dbReference>
<dbReference type="GO" id="GO:0051015">
    <property type="term" value="F:actin filament binding"/>
    <property type="evidence" value="ECO:0007669"/>
    <property type="project" value="TreeGrafter"/>
</dbReference>
<dbReference type="GO" id="GO:0046872">
    <property type="term" value="F:metal ion binding"/>
    <property type="evidence" value="ECO:0007669"/>
    <property type="project" value="UniProtKB-KW"/>
</dbReference>
<dbReference type="GO" id="GO:0016491">
    <property type="term" value="F:oxidoreductase activity"/>
    <property type="evidence" value="ECO:0007669"/>
    <property type="project" value="UniProtKB-KW"/>
</dbReference>
<dbReference type="GO" id="GO:0017000">
    <property type="term" value="P:antibiotic biosynthetic process"/>
    <property type="evidence" value="ECO:0007669"/>
    <property type="project" value="UniProtKB-KW"/>
</dbReference>
<dbReference type="FunFam" id="3.40.225.10:FF:000009">
    <property type="entry name" value="Class II aldolase/adducin N-terminal"/>
    <property type="match status" value="1"/>
</dbReference>
<dbReference type="Gene3D" id="3.40.225.10">
    <property type="entry name" value="Class II aldolase/adducin N-terminal domain"/>
    <property type="match status" value="1"/>
</dbReference>
<dbReference type="InterPro" id="IPR051017">
    <property type="entry name" value="Aldolase-II_Adducin_sf"/>
</dbReference>
<dbReference type="InterPro" id="IPR001303">
    <property type="entry name" value="Aldolase_II/adducin_N"/>
</dbReference>
<dbReference type="InterPro" id="IPR036409">
    <property type="entry name" value="Aldolase_II/adducin_N_sf"/>
</dbReference>
<dbReference type="NCBIfam" id="NF004855">
    <property type="entry name" value="PRK06208.1"/>
    <property type="match status" value="1"/>
</dbReference>
<dbReference type="PANTHER" id="PTHR10672">
    <property type="entry name" value="ADDUCIN"/>
    <property type="match status" value="1"/>
</dbReference>
<dbReference type="PANTHER" id="PTHR10672:SF3">
    <property type="entry name" value="PROTEIN HU-LI TAI SHAO"/>
    <property type="match status" value="1"/>
</dbReference>
<dbReference type="Pfam" id="PF00596">
    <property type="entry name" value="Aldolase_II"/>
    <property type="match status" value="1"/>
</dbReference>
<dbReference type="SMART" id="SM01007">
    <property type="entry name" value="Aldolase_II"/>
    <property type="match status" value="1"/>
</dbReference>
<dbReference type="SUPFAM" id="SSF53639">
    <property type="entry name" value="AraD/HMP-PK domain-like"/>
    <property type="match status" value="1"/>
</dbReference>
<sequence>MSKALANMPGDDYFRHPPVFDTYAEHRAYLKFRHAVALRHFARLGFDQDGLAGLITVADPEHADTYWANPLAHPFSTITPADLIRVDGDSTETVDGQRRVNIAAFNIHAEIHRARPDVQAVIHLHTVYGRAFSAFARKLPPLTQDACPFFEDHEVFDDYTGLVLAKDDGRRIAKQLRGHKAILLKNHGLVTVGETLDAAAWWFTLLDTCCHVQLLADAAGGAEPIPAEVARLTGQQLGSHLLGWNSYQPLHEATLARNPDLAAMAPALPPQTPALAR</sequence>
<comment type="function">
    <text evidence="1 2">Involved in the biosynthesis of ring A of the aminocoumarin antibiotic clorobiocin (PubMed:12480894). Catalyzes two consecutive oxidative decarboxylations of 3-dimethylallyl-4-hydroxyphenylpyruvate (3DMA-4HPP) to yield 3-dimethylallyl-4-hydroxybenzoate (3DMA-4HB) via the 3-dimethylallyl-4-hydroxymandelic acid (3DMA-4HMA) intermediate (PubMed:12777382).</text>
</comment>
<comment type="catalytic activity">
    <reaction evidence="2">
        <text>3-dimethylallyl-4-hydroxyphenylpyruvate + O2 = 3-dimethylallyl-4-hydroxymandelate + CO2</text>
        <dbReference type="Rhea" id="RHEA:52908"/>
        <dbReference type="ChEBI" id="CHEBI:15379"/>
        <dbReference type="ChEBI" id="CHEBI:16526"/>
        <dbReference type="ChEBI" id="CHEBI:74408"/>
        <dbReference type="ChEBI" id="CHEBI:136890"/>
        <dbReference type="EC" id="1.13.11.83"/>
    </reaction>
</comment>
<comment type="catalytic activity">
    <reaction evidence="2">
        <text>3-dimethylallyl-4-hydroxymandelate + O2 = 3-dimethylallyl-4-hydroxybenzoate + CO2 + H2O</text>
        <dbReference type="Rhea" id="RHEA:52912"/>
        <dbReference type="ChEBI" id="CHEBI:15377"/>
        <dbReference type="ChEBI" id="CHEBI:15379"/>
        <dbReference type="ChEBI" id="CHEBI:16526"/>
        <dbReference type="ChEBI" id="CHEBI:74155"/>
        <dbReference type="ChEBI" id="CHEBI:136890"/>
        <dbReference type="EC" id="1.13.12.23"/>
    </reaction>
</comment>
<comment type="cofactor">
    <cofactor evidence="2">
        <name>Fe(2+)</name>
        <dbReference type="ChEBI" id="CHEBI:29033"/>
    </cofactor>
</comment>
<comment type="activity regulation">
    <text evidence="2">Activated by ascorbate.</text>
</comment>
<comment type="pathway">
    <text evidence="6">Antibiotic biosynthesis.</text>
</comment>
<comment type="subunit">
    <text evidence="2">Homotetramer.</text>
</comment>
<comment type="disruption phenotype">
    <text evidence="1">Cells lacking this gene are unable to produce clorobiocin.</text>
</comment>
<comment type="similarity">
    <text evidence="5">Belongs to the aldolase class II family.</text>
</comment>
<keyword id="KW-0045">Antibiotic biosynthesis</keyword>
<keyword id="KW-0408">Iron</keyword>
<keyword id="KW-0479">Metal-binding</keyword>
<keyword id="KW-0560">Oxidoreductase</keyword>
<name>CLOR_STRRC</name>
<evidence type="ECO:0000269" key="1">
    <source>
    </source>
</evidence>
<evidence type="ECO:0000269" key="2">
    <source>
    </source>
</evidence>
<evidence type="ECO:0000303" key="3">
    <source>
    </source>
</evidence>
<evidence type="ECO:0000303" key="4">
    <source>
    </source>
</evidence>
<evidence type="ECO:0000305" key="5"/>
<evidence type="ECO:0000305" key="6">
    <source>
    </source>
</evidence>
<evidence type="ECO:0000312" key="7">
    <source>
        <dbReference type="EMBL" id="AAN65240.1"/>
    </source>
</evidence>